<accession>Q9CG28</accession>
<gene>
    <name evidence="1" type="primary">murI</name>
    <name type="ordered locus">LL1282</name>
    <name type="ORF">L0120</name>
</gene>
<proteinExistence type="inferred from homology"/>
<name>MURI_LACLA</name>
<keyword id="KW-0133">Cell shape</keyword>
<keyword id="KW-0961">Cell wall biogenesis/degradation</keyword>
<keyword id="KW-0413">Isomerase</keyword>
<keyword id="KW-0573">Peptidoglycan synthesis</keyword>
<keyword id="KW-1185">Reference proteome</keyword>
<comment type="function">
    <text evidence="1">Provides the (R)-glutamate required for cell wall biosynthesis.</text>
</comment>
<comment type="catalytic activity">
    <reaction evidence="1">
        <text>L-glutamate = D-glutamate</text>
        <dbReference type="Rhea" id="RHEA:12813"/>
        <dbReference type="ChEBI" id="CHEBI:29985"/>
        <dbReference type="ChEBI" id="CHEBI:29986"/>
        <dbReference type="EC" id="5.1.1.3"/>
    </reaction>
</comment>
<comment type="pathway">
    <text evidence="1">Cell wall biogenesis; peptidoglycan biosynthesis.</text>
</comment>
<comment type="similarity">
    <text evidence="1">Belongs to the aspartate/glutamate racemases family.</text>
</comment>
<feature type="chain" id="PRO_0000095480" description="Glutamate racemase">
    <location>
        <begin position="1"/>
        <end position="271"/>
    </location>
</feature>
<feature type="active site" description="Proton donor/acceptor" evidence="1">
    <location>
        <position position="73"/>
    </location>
</feature>
<feature type="active site" description="Proton donor/acceptor" evidence="1">
    <location>
        <position position="183"/>
    </location>
</feature>
<feature type="binding site" evidence="1">
    <location>
        <begin position="10"/>
        <end position="11"/>
    </location>
    <ligand>
        <name>substrate</name>
    </ligand>
</feature>
<feature type="binding site" evidence="1">
    <location>
        <begin position="42"/>
        <end position="43"/>
    </location>
    <ligand>
        <name>substrate</name>
    </ligand>
</feature>
<feature type="binding site" evidence="1">
    <location>
        <begin position="74"/>
        <end position="75"/>
    </location>
    <ligand>
        <name>substrate</name>
    </ligand>
</feature>
<feature type="binding site" evidence="1">
    <location>
        <begin position="184"/>
        <end position="185"/>
    </location>
    <ligand>
        <name>substrate</name>
    </ligand>
</feature>
<sequence>MDNRPIGLLDSGVGGLTVARELLRQLPNEEIVYIGDTRRAPYGPRSREQIIAFTWDMVNFLLSKDVKMIVMACNTATAMALEIVKEKLDIPVIGVILPGASSAIQKTKTNKIGVIATQASIRSDEYHKTIARKSSAVEVYSLACPKFVSIVESNEMESEIARKVVSESLVPLIGKVDTLILGCTHYPLLRSLIQETMGKEVRLIDSGAEAVRDISVLLNYFSINGQERQPLEHRFYTTAGVNSFREIAEKWLNIGQLQIEHTEIENFNKEK</sequence>
<reference key="1">
    <citation type="journal article" date="2001" name="Genome Res.">
        <title>The complete genome sequence of the lactic acid bacterium Lactococcus lactis ssp. lactis IL1403.</title>
        <authorList>
            <person name="Bolotin A."/>
            <person name="Wincker P."/>
            <person name="Mauger S."/>
            <person name="Jaillon O."/>
            <person name="Malarme K."/>
            <person name="Weissenbach J."/>
            <person name="Ehrlich S.D."/>
            <person name="Sorokin A."/>
        </authorList>
    </citation>
    <scope>NUCLEOTIDE SEQUENCE [LARGE SCALE GENOMIC DNA]</scope>
    <source>
        <strain>IL1403</strain>
    </source>
</reference>
<protein>
    <recommendedName>
        <fullName evidence="1">Glutamate racemase</fullName>
        <ecNumber evidence="1">5.1.1.3</ecNumber>
    </recommendedName>
</protein>
<organism>
    <name type="scientific">Lactococcus lactis subsp. lactis (strain IL1403)</name>
    <name type="common">Streptococcus lactis</name>
    <dbReference type="NCBI Taxonomy" id="272623"/>
    <lineage>
        <taxon>Bacteria</taxon>
        <taxon>Bacillati</taxon>
        <taxon>Bacillota</taxon>
        <taxon>Bacilli</taxon>
        <taxon>Lactobacillales</taxon>
        <taxon>Streptococcaceae</taxon>
        <taxon>Lactococcus</taxon>
    </lineage>
</organism>
<evidence type="ECO:0000255" key="1">
    <source>
        <dbReference type="HAMAP-Rule" id="MF_00258"/>
    </source>
</evidence>
<dbReference type="EC" id="5.1.1.3" evidence="1"/>
<dbReference type="EMBL" id="AE005176">
    <property type="protein sequence ID" value="AAK05380.1"/>
    <property type="molecule type" value="Genomic_DNA"/>
</dbReference>
<dbReference type="PIR" id="B86785">
    <property type="entry name" value="B86785"/>
</dbReference>
<dbReference type="SMR" id="Q9CG28"/>
<dbReference type="PaxDb" id="272623-L0120"/>
<dbReference type="EnsemblBacteria" id="AAK05380">
    <property type="protein sequence ID" value="AAK05380"/>
    <property type="gene ID" value="L0120"/>
</dbReference>
<dbReference type="KEGG" id="lla:L0120"/>
<dbReference type="eggNOG" id="COG0796">
    <property type="taxonomic scope" value="Bacteria"/>
</dbReference>
<dbReference type="HOGENOM" id="CLU_052344_0_2_9"/>
<dbReference type="UniPathway" id="UPA00219"/>
<dbReference type="Proteomes" id="UP000002196">
    <property type="component" value="Chromosome"/>
</dbReference>
<dbReference type="GO" id="GO:0008881">
    <property type="term" value="F:glutamate racemase activity"/>
    <property type="evidence" value="ECO:0007669"/>
    <property type="project" value="UniProtKB-UniRule"/>
</dbReference>
<dbReference type="GO" id="GO:0071555">
    <property type="term" value="P:cell wall organization"/>
    <property type="evidence" value="ECO:0007669"/>
    <property type="project" value="UniProtKB-KW"/>
</dbReference>
<dbReference type="GO" id="GO:0009252">
    <property type="term" value="P:peptidoglycan biosynthetic process"/>
    <property type="evidence" value="ECO:0007669"/>
    <property type="project" value="UniProtKB-UniRule"/>
</dbReference>
<dbReference type="GO" id="GO:0008360">
    <property type="term" value="P:regulation of cell shape"/>
    <property type="evidence" value="ECO:0007669"/>
    <property type="project" value="UniProtKB-KW"/>
</dbReference>
<dbReference type="FunFam" id="3.40.50.1860:FF:000002">
    <property type="entry name" value="Glutamate racemase"/>
    <property type="match status" value="1"/>
</dbReference>
<dbReference type="Gene3D" id="3.40.50.1860">
    <property type="match status" value="2"/>
</dbReference>
<dbReference type="HAMAP" id="MF_00258">
    <property type="entry name" value="Glu_racemase"/>
    <property type="match status" value="1"/>
</dbReference>
<dbReference type="InterPro" id="IPR015942">
    <property type="entry name" value="Asp/Glu/hydantoin_racemase"/>
</dbReference>
<dbReference type="InterPro" id="IPR001920">
    <property type="entry name" value="Asp/Glu_race"/>
</dbReference>
<dbReference type="InterPro" id="IPR018187">
    <property type="entry name" value="Asp/Glu_racemase_AS_1"/>
</dbReference>
<dbReference type="InterPro" id="IPR033134">
    <property type="entry name" value="Asp/Glu_racemase_AS_2"/>
</dbReference>
<dbReference type="InterPro" id="IPR004391">
    <property type="entry name" value="Glu_race"/>
</dbReference>
<dbReference type="NCBIfam" id="TIGR00067">
    <property type="entry name" value="glut_race"/>
    <property type="match status" value="1"/>
</dbReference>
<dbReference type="NCBIfam" id="NF002035">
    <property type="entry name" value="PRK00865.1-3"/>
    <property type="match status" value="1"/>
</dbReference>
<dbReference type="PANTHER" id="PTHR21198">
    <property type="entry name" value="GLUTAMATE RACEMASE"/>
    <property type="match status" value="1"/>
</dbReference>
<dbReference type="PANTHER" id="PTHR21198:SF2">
    <property type="entry name" value="GLUTAMATE RACEMASE"/>
    <property type="match status" value="1"/>
</dbReference>
<dbReference type="Pfam" id="PF01177">
    <property type="entry name" value="Asp_Glu_race"/>
    <property type="match status" value="1"/>
</dbReference>
<dbReference type="SUPFAM" id="SSF53681">
    <property type="entry name" value="Aspartate/glutamate racemase"/>
    <property type="match status" value="2"/>
</dbReference>
<dbReference type="PROSITE" id="PS00923">
    <property type="entry name" value="ASP_GLU_RACEMASE_1"/>
    <property type="match status" value="1"/>
</dbReference>
<dbReference type="PROSITE" id="PS00924">
    <property type="entry name" value="ASP_GLU_RACEMASE_2"/>
    <property type="match status" value="1"/>
</dbReference>